<protein>
    <recommendedName>
        <fullName>Vacuolar protein sorting-associated protein 18 homolog</fullName>
    </recommendedName>
    <alternativeName>
        <fullName evidence="15">Protein deep orange</fullName>
    </alternativeName>
</protein>
<feature type="chain" id="PRO_0000055905" description="Vacuolar protein sorting-associated protein 18 homolog">
    <location>
        <begin position="1"/>
        <end position="1002"/>
    </location>
</feature>
<feature type="repeat" description="CHCR" evidence="3">
    <location>
        <begin position="650"/>
        <end position="804"/>
    </location>
</feature>
<feature type="zinc finger region" description="RING-type; degenerate" evidence="2">
    <location>
        <begin position="885"/>
        <end position="924"/>
    </location>
</feature>
<feature type="coiled-coil region" evidence="1">
    <location>
        <begin position="827"/>
        <end position="880"/>
    </location>
</feature>
<feature type="modified residue" description="Phosphoserine" evidence="5">
    <location>
        <position position="344"/>
    </location>
</feature>
<feature type="mutagenesis site" description="In dor-36; reduced endolysosomal trafficking and thus reduced number of effective vesicles released in response to a nerve impulse (quantal content). This is likely largely due to the reduction in readily releasable vesicles. Accumulation of the mature form of CtsL1/Cathepsin L. Expression in sky mutants partially rescues increased neurotransmitter release at the larval neuromuscular junction and neurodegeneration in the retina. However it does not rescue the excessive recycling of vesicles to endosomal compartments in sky mutants." evidence="9">
    <location>
        <begin position="508"/>
        <end position="1002"/>
    </location>
</feature>
<feature type="mutagenesis site" description="In dor-30; Accumulation of the mature form of CtsL1/Cathepsin L." evidence="9">
    <location>
        <begin position="551"/>
        <end position="1002"/>
    </location>
</feature>
<feature type="mutagenesis site" description="In dor-1; diminished fertility and an orange eye color." evidence="4">
    <original>C</original>
    <variation>Y</variation>
    <location>
        <position position="979"/>
    </location>
</feature>
<feature type="sequence conflict" description="In Ref. 2; AAF45652." evidence="15" ref="2">
    <original>E</original>
    <variation>D</variation>
    <location>
        <position position="40"/>
    </location>
</feature>
<feature type="sequence conflict" description="In Ref. 1; CAA60382." evidence="15" ref="1">
    <original>A</original>
    <variation>P</variation>
    <location>
        <position position="169"/>
    </location>
</feature>
<feature type="sequence conflict" description="In Ref. 1; CAA60382." evidence="15" ref="1">
    <original>Q</original>
    <variation>H</variation>
    <location>
        <position position="581"/>
    </location>
</feature>
<feature type="sequence conflict" description="In Ref. 4; CAA16809." evidence="15" ref="4">
    <original>V</original>
    <variation>A</variation>
    <location>
        <position position="865"/>
    </location>
</feature>
<accession>Q24314</accession>
<accession>Q95R67</accession>
<accession>Q9W570</accession>
<dbReference type="EMBL" id="X86683">
    <property type="protein sequence ID" value="CAA60382.1"/>
    <property type="molecule type" value="mRNA"/>
</dbReference>
<dbReference type="EMBL" id="AE014298">
    <property type="protein sequence ID" value="AAF45652.1"/>
    <property type="molecule type" value="Genomic_DNA"/>
</dbReference>
<dbReference type="EMBL" id="AL021726">
    <property type="protein sequence ID" value="CAA16809.1"/>
    <property type="molecule type" value="Genomic_DNA"/>
</dbReference>
<dbReference type="EMBL" id="AY061592">
    <property type="protein sequence ID" value="AAL29140.1"/>
    <property type="molecule type" value="mRNA"/>
</dbReference>
<dbReference type="PIR" id="S54252">
    <property type="entry name" value="S54252"/>
</dbReference>
<dbReference type="RefSeq" id="NP_477286.2">
    <property type="nucleotide sequence ID" value="NM_057938.5"/>
</dbReference>
<dbReference type="SMR" id="Q24314"/>
<dbReference type="BioGRID" id="57669">
    <property type="interactions" value="27"/>
</dbReference>
<dbReference type="ComplexPortal" id="CPX-8877">
    <property type="entry name" value="CORVET tethering complex"/>
</dbReference>
<dbReference type="ComplexPortal" id="CPX-936">
    <property type="entry name" value="HOPS tethering complex"/>
</dbReference>
<dbReference type="FunCoup" id="Q24314">
    <property type="interactions" value="2356"/>
</dbReference>
<dbReference type="IntAct" id="Q24314">
    <property type="interactions" value="8"/>
</dbReference>
<dbReference type="STRING" id="7227.FBpp0070259"/>
<dbReference type="MoonProt" id="Q24314"/>
<dbReference type="iPTMnet" id="Q24314"/>
<dbReference type="PaxDb" id="7227-FBpp0070259"/>
<dbReference type="PeptideAtlas" id="Q24314"/>
<dbReference type="DNASU" id="31118"/>
<dbReference type="EnsemblMetazoa" id="FBtr0070269">
    <property type="protein sequence ID" value="FBpp0070259"/>
    <property type="gene ID" value="FBgn0000482"/>
</dbReference>
<dbReference type="GeneID" id="31118"/>
<dbReference type="KEGG" id="dme:Dmel_CG3093"/>
<dbReference type="AGR" id="FB:FBgn0000482"/>
<dbReference type="CTD" id="31118"/>
<dbReference type="FlyBase" id="FBgn0000482">
    <property type="gene designation" value="dor"/>
</dbReference>
<dbReference type="VEuPathDB" id="VectorBase:FBgn0000482"/>
<dbReference type="eggNOG" id="KOG2034">
    <property type="taxonomic scope" value="Eukaryota"/>
</dbReference>
<dbReference type="GeneTree" id="ENSGT00940000153635"/>
<dbReference type="HOGENOM" id="CLU_003488_1_0_1"/>
<dbReference type="InParanoid" id="Q24314"/>
<dbReference type="OrthoDB" id="1845386at2759"/>
<dbReference type="PhylomeDB" id="Q24314"/>
<dbReference type="SignaLink" id="Q24314"/>
<dbReference type="BioGRID-ORCS" id="31118">
    <property type="hits" value="0 hits in 3 CRISPR screens"/>
</dbReference>
<dbReference type="GenomeRNAi" id="31118"/>
<dbReference type="PRO" id="PR:Q24314"/>
<dbReference type="Proteomes" id="UP000000803">
    <property type="component" value="Chromosome X"/>
</dbReference>
<dbReference type="Bgee" id="FBgn0000482">
    <property type="expression patterns" value="Expressed in T neuron T5d (Drosophila) in embryonic/larval optic lobe (Drosophila) and 38 other cell types or tissues"/>
</dbReference>
<dbReference type="ExpressionAtlas" id="Q24314">
    <property type="expression patterns" value="baseline and differential"/>
</dbReference>
<dbReference type="GO" id="GO:0000421">
    <property type="term" value="C:autophagosome membrane"/>
    <property type="evidence" value="ECO:0000314"/>
    <property type="project" value="UniProtKB"/>
</dbReference>
<dbReference type="GO" id="GO:0033263">
    <property type="term" value="C:CORVET complex"/>
    <property type="evidence" value="ECO:0000314"/>
    <property type="project" value="UniProtKB"/>
</dbReference>
<dbReference type="GO" id="GO:0005769">
    <property type="term" value="C:early endosome"/>
    <property type="evidence" value="ECO:0007669"/>
    <property type="project" value="UniProtKB-SubCell"/>
</dbReference>
<dbReference type="GO" id="GO:0005768">
    <property type="term" value="C:endosome"/>
    <property type="evidence" value="ECO:0000314"/>
    <property type="project" value="FlyBase"/>
</dbReference>
<dbReference type="GO" id="GO:0030897">
    <property type="term" value="C:HOPS complex"/>
    <property type="evidence" value="ECO:0000314"/>
    <property type="project" value="FlyBase"/>
</dbReference>
<dbReference type="GO" id="GO:0031902">
    <property type="term" value="C:late endosome membrane"/>
    <property type="evidence" value="ECO:0007669"/>
    <property type="project" value="UniProtKB-SubCell"/>
</dbReference>
<dbReference type="GO" id="GO:0005765">
    <property type="term" value="C:lysosomal membrane"/>
    <property type="evidence" value="ECO:0007669"/>
    <property type="project" value="UniProtKB-SubCell"/>
</dbReference>
<dbReference type="GO" id="GO:0005764">
    <property type="term" value="C:lysosome"/>
    <property type="evidence" value="ECO:0000314"/>
    <property type="project" value="UniProtKB"/>
</dbReference>
<dbReference type="GO" id="GO:0031594">
    <property type="term" value="C:neuromuscular junction"/>
    <property type="evidence" value="ECO:0000314"/>
    <property type="project" value="SynGO"/>
</dbReference>
<dbReference type="GO" id="GO:0045202">
    <property type="term" value="C:synapse"/>
    <property type="evidence" value="ECO:0000315"/>
    <property type="project" value="FlyBase"/>
</dbReference>
<dbReference type="GO" id="GO:0030674">
    <property type="term" value="F:protein-macromolecule adaptor activity"/>
    <property type="evidence" value="ECO:0000318"/>
    <property type="project" value="GO_Central"/>
</dbReference>
<dbReference type="GO" id="GO:0061630">
    <property type="term" value="F:ubiquitin protein ligase activity"/>
    <property type="evidence" value="ECO:0000250"/>
    <property type="project" value="FlyBase"/>
</dbReference>
<dbReference type="GO" id="GO:0008270">
    <property type="term" value="F:zinc ion binding"/>
    <property type="evidence" value="ECO:0000255"/>
    <property type="project" value="FlyBase"/>
</dbReference>
<dbReference type="GO" id="GO:0097352">
    <property type="term" value="P:autophagosome maturation"/>
    <property type="evidence" value="ECO:0000315"/>
    <property type="project" value="FlyBase"/>
</dbReference>
<dbReference type="GO" id="GO:0007298">
    <property type="term" value="P:border follicle cell migration"/>
    <property type="evidence" value="ECO:0000315"/>
    <property type="project" value="FlyBase"/>
</dbReference>
<dbReference type="GO" id="GO:0051301">
    <property type="term" value="P:cell division"/>
    <property type="evidence" value="ECO:0000315"/>
    <property type="project" value="FlyBase"/>
</dbReference>
<dbReference type="GO" id="GO:0009267">
    <property type="term" value="P:cellular response to starvation"/>
    <property type="evidence" value="ECO:0000315"/>
    <property type="project" value="FlyBase"/>
</dbReference>
<dbReference type="GO" id="GO:0048072">
    <property type="term" value="P:compound eye pigmentation"/>
    <property type="evidence" value="ECO:0000315"/>
    <property type="project" value="FlyBase"/>
</dbReference>
<dbReference type="GO" id="GO:0008340">
    <property type="term" value="P:determination of adult lifespan"/>
    <property type="evidence" value="ECO:0000315"/>
    <property type="project" value="FlyBase"/>
</dbReference>
<dbReference type="GO" id="GO:0045022">
    <property type="term" value="P:early endosome to late endosome transport"/>
    <property type="evidence" value="ECO:0000315"/>
    <property type="project" value="FlyBase"/>
</dbReference>
<dbReference type="GO" id="GO:0032456">
    <property type="term" value="P:endocytic recycling"/>
    <property type="evidence" value="ECO:0000315"/>
    <property type="project" value="FlyBase"/>
</dbReference>
<dbReference type="GO" id="GO:0006897">
    <property type="term" value="P:endocytosis"/>
    <property type="evidence" value="ECO:0000315"/>
    <property type="project" value="FlyBase"/>
</dbReference>
<dbReference type="GO" id="GO:0016197">
    <property type="term" value="P:endosomal transport"/>
    <property type="evidence" value="ECO:0000250"/>
    <property type="project" value="FlyBase"/>
</dbReference>
<dbReference type="GO" id="GO:0034058">
    <property type="term" value="P:endosomal vesicle fusion"/>
    <property type="evidence" value="ECO:0000315"/>
    <property type="project" value="UniProtKB"/>
</dbReference>
<dbReference type="GO" id="GO:0007032">
    <property type="term" value="P:endosome organization"/>
    <property type="evidence" value="ECO:0000315"/>
    <property type="project" value="FlyBase"/>
</dbReference>
<dbReference type="GO" id="GO:0008333">
    <property type="term" value="P:endosome to lysosome transport"/>
    <property type="evidence" value="ECO:0000315"/>
    <property type="project" value="FlyBase"/>
</dbReference>
<dbReference type="GO" id="GO:0008057">
    <property type="term" value="P:eye pigment granule organization"/>
    <property type="evidence" value="ECO:0000315"/>
    <property type="project" value="UniProtKB"/>
</dbReference>
<dbReference type="GO" id="GO:0007041">
    <property type="term" value="P:lysosomal transport"/>
    <property type="evidence" value="ECO:0000315"/>
    <property type="project" value="FlyBase"/>
</dbReference>
<dbReference type="GO" id="GO:0007040">
    <property type="term" value="P:lysosome organization"/>
    <property type="evidence" value="ECO:0000318"/>
    <property type="project" value="GO_Central"/>
</dbReference>
<dbReference type="GO" id="GO:0007220">
    <property type="term" value="P:Notch receptor processing"/>
    <property type="evidence" value="ECO:0000315"/>
    <property type="project" value="FlyBase"/>
</dbReference>
<dbReference type="GO" id="GO:0048284">
    <property type="term" value="P:organelle fusion"/>
    <property type="evidence" value="ECO:0000318"/>
    <property type="project" value="GO_Central"/>
</dbReference>
<dbReference type="GO" id="GO:0061357">
    <property type="term" value="P:positive regulation of Wnt protein secretion"/>
    <property type="evidence" value="ECO:0000315"/>
    <property type="project" value="FlyBase"/>
</dbReference>
<dbReference type="GO" id="GO:0006622">
    <property type="term" value="P:protein targeting to lysosome"/>
    <property type="evidence" value="ECO:0000315"/>
    <property type="project" value="UniProtKB"/>
</dbReference>
<dbReference type="GO" id="GO:0016567">
    <property type="term" value="P:protein ubiquitination"/>
    <property type="evidence" value="ECO:0000250"/>
    <property type="project" value="FlyBase"/>
</dbReference>
<dbReference type="GO" id="GO:0006898">
    <property type="term" value="P:receptor-mediated endocytosis"/>
    <property type="evidence" value="ECO:0000315"/>
    <property type="project" value="FlyBase"/>
</dbReference>
<dbReference type="GO" id="GO:0035542">
    <property type="term" value="P:regulation of SNARE complex assembly"/>
    <property type="evidence" value="ECO:0000250"/>
    <property type="project" value="FlyBase"/>
</dbReference>
<dbReference type="GO" id="GO:0098693">
    <property type="term" value="P:regulation of synaptic vesicle cycle"/>
    <property type="evidence" value="ECO:0000314"/>
    <property type="project" value="SynGO"/>
</dbReference>
<dbReference type="GO" id="GO:0160156">
    <property type="term" value="P:secretory granule-lysosome fusion"/>
    <property type="evidence" value="ECO:0000315"/>
    <property type="project" value="FlyBase"/>
</dbReference>
<dbReference type="GO" id="GO:0033292">
    <property type="term" value="P:T-tubule organization"/>
    <property type="evidence" value="ECO:0000315"/>
    <property type="project" value="UniProtKB"/>
</dbReference>
<dbReference type="GO" id="GO:0006904">
    <property type="term" value="P:vesicle docking involved in exocytosis"/>
    <property type="evidence" value="ECO:0000318"/>
    <property type="project" value="GO_Central"/>
</dbReference>
<dbReference type="Gene3D" id="3.30.40.10">
    <property type="entry name" value="Zinc/RING finger domain, C3HC4 (zinc finger)"/>
    <property type="match status" value="1"/>
</dbReference>
<dbReference type="InterPro" id="IPR000547">
    <property type="entry name" value="Clathrin_H-chain/VPS_repeat"/>
</dbReference>
<dbReference type="InterPro" id="IPR007810">
    <property type="entry name" value="Pep3_Vps18"/>
</dbReference>
<dbReference type="InterPro" id="IPR013083">
    <property type="entry name" value="Znf_RING/FYVE/PHD"/>
</dbReference>
<dbReference type="PANTHER" id="PTHR23323">
    <property type="entry name" value="VACUOLAR PROTEIN SORTING-ASSOCIATED PROTEIN"/>
    <property type="match status" value="1"/>
</dbReference>
<dbReference type="PANTHER" id="PTHR23323:SF26">
    <property type="entry name" value="VACUOLAR PROTEIN SORTING-ASSOCIATED PROTEIN 18 HOMOLOG"/>
    <property type="match status" value="1"/>
</dbReference>
<dbReference type="Pfam" id="PF05131">
    <property type="entry name" value="Pep3_Vps18"/>
    <property type="match status" value="1"/>
</dbReference>
<dbReference type="SUPFAM" id="SSF57850">
    <property type="entry name" value="RING/U-box"/>
    <property type="match status" value="1"/>
</dbReference>
<dbReference type="PROSITE" id="PS50236">
    <property type="entry name" value="CHCR"/>
    <property type="match status" value="1"/>
</dbReference>
<sequence length="1002" mass="115334">MDTSMPNQPKFLPRIEHNSSGATANSYVATASGNPFETDEEDEIFSRHKMVLRVPSNCTGDLMHLAVSRNWLVCLLGTPERTTLLRFFLPRAIPPGEAVLEKYLSGSGYKITRMFLDPTGHHIIIALVPKSATAGVSPDFLYIHCLESPQAQQLKVRRIEKFKDHEITAVAFNPYHGNESSTGPILLGTSRGLIFETELNPAADGHVQRKQLYDLGLGRPKYPITGLKLLRVPNSSRYIIVVTSPECIYTFQETLKAEERSLQAIFAGYVSGVQEPHCEERKTDLTFSQLRFFAPPNSKYPKQWAWLCGEGIRVGELSIEANSAATLIGNTLINLDFEKTMHLSYGERRLNTPKAFVLTEYHAVLLYADHVRAICLLNQEQVYQEAFDEARVGKPLSIERDELTGSIYVYTVKTVFNLRVTREERNVWRIYLDKGQYELATAHAAEDPEHLQLVLCQRADAAFADGSYQVAADYYAETDKSFEEVCLKFMVLPDKRPIINYVKKRLSRVTTKPMETDELDEDKMNIIKALVIWLIDLYLIQINMPDKDEEWRSSWQTEYDEFMMEAHVLSCTRQNRETVRQLIAEHADPRNMAQFAIAIGDYDEVVAQQLKAECYAEALQTLINQRNPELFYKYAPELITRLPKPTVDALMAQGSRLEVEKLVPTLIIMENREQREQTQRYLEFAIYKLNTTNDAIHNFLLHLYAEHEPKLLMKYLEIQGRDESLVHYDIYYAHKVCTDLDVKEARVFLECMLRKWISAVDLALTFDMKLAKETASRPSDSKIRRKLWLRIAYHDIKGTNDVKKALNLLKECDLLRIEDLLPFFADFEKIDNFKEAICDALRDYNQRIQELQREMAETTEQTDRVTAELQQLRQHSLTVESQDTCEICEMMLLVKPFFIFICGHKFHSDCLEKHVVPLLTKEQCRRLGTLKQQLEAEVQTQAQPQSGALSKQQAMELQRKRAALKTEIEDILAADCLFCGLLISTIDQPFVDDWEQVNVEWE</sequence>
<proteinExistence type="evidence at protein level"/>
<comment type="function">
    <text evidence="4 7 8 9 10 11 12 13">Core component of the class C core vacuole/endosome tethering (CORVET) and the homotypic fusion and vacuole protein sorting (HOPS) tethering complexes involved in endo-lysosomal vesicle trafficking and lysosome biogenesis (PubMed:10549280, PubMed:24554766, PubMed:25422373, PubMed:27253064, PubMed:28063257, PubMed:31194677, PubMed:9065698). The CORVET complex facilitates docking and fusion of endosomal vesicles during endosome maturation, acts upstream of HOPS, but is not involved in autophagic flux (PubMed:10549280, PubMed:25422373, PubMed:27253064, PubMed:31194677). The CORVET complex may cooperate with the early endosomal tether Rbsn-5 to mediate endosomal fusion (PubMed:27253064). The HOPS complex facilitates docking and fusion of lysosomes with late endosomes and several other types of vesicles (PubMed:24554766, PubMed:28063257, PubMed:31194677). The HOPS complex is also involved in autophagy and crinophagy (the elimination of unused secretory granules through their fusion with lysosomes) (PubMed:24554766, PubMed:31194677). The HOPS complex mediates autophagocitic flux, probably by binding autophagosome-associated Syx17/syntaxin 17, promoting assembly of the trans-SNARE complex and instigating autophagosome-lysosome fusion (PubMed:24554766, PubMed:28063257). Independent of Syx17/syntaxin 17, HOPS is involved in biosynthetic transport to lysosomes and lysosome-related organelles such as eye-pigment granules (PubMed:10549280, PubMed:24554766, PubMed:31194677). Required for endocytic degradation of boss/bride of sevenless and N/Notch in developing ommatidia (PubMed:24554766). Required for autophagocytosis-dependent remodeling of myofibrils and transverse-tubules (T-tubules) during metamorphosis (PubMed:28063257). In larval neuromuscular junctions, essential for endosomal sorting that traffics old or dysfunctional synaptic vesicle proteins through a degradative endolysosomal route (PubMed:25422373). Required to maintain normal levels of rush, which functions in endosome formation and trafficking (PubMed:22160599).</text>
</comment>
<comment type="subunit">
    <text evidence="4 6 8 10 12 14">Component of the class C core vacuole/endosome tethering (CORVET) complex composed of at least Vps8, dor/Vps18, car/Vps33A and Vps16A; unlike in other species, Vps11 is not part of the Drosophila complex (PubMed:27253064). Due to the reduced number of components the Drosophila CORVET complex is often referred to as the miniCORVET complex (PubMed:27253064). Interacts with car/Vps33A (PubMed:10549280). Interacts with ema (PubMed:20194640). Component of the homotypic fusion and vacuole protein sorting (HOPS) complex, composed of Vps16A, car/Vps33A, dor/Vps18, Vps39, Vps11 and lt/Vps41 (PubMed:31194677). The tethering complex core made up of Vps16A, car/Vps33A and dor/Vps18 and shared by both HOPS and CORVET, preferentially associates with CORVET-specific Vps8 over HOPS-specific lt/Vps41 (PubMed:31194677). Interacts with Syx17 (via SNARE domain); the interaction may involve multiple components of the HOPS complex and may promote assembly of the Syx17-Snap29-Vamp7 trans-SNARE complex (PubMed:24554766).</text>
</comment>
<comment type="interaction">
    <interactant intactId="EBI-421908">
        <id>Q24314</id>
    </interactant>
    <interactant intactId="EBI-192483">
        <id>Q9VRX2</id>
        <label>Vps8</label>
    </interactant>
    <organismsDiffer>false</organismsDiffer>
    <experiments>5</experiments>
</comment>
<comment type="subcellular location">
    <subcellularLocation>
        <location evidence="17">Early endosome</location>
    </subcellularLocation>
    <subcellularLocation>
        <location evidence="4">Late endosome membrane</location>
        <topology evidence="4">Peripheral membrane protein</topology>
        <orientation evidence="4">Cytoplasmic side</orientation>
    </subcellularLocation>
    <subcellularLocation>
        <location evidence="4">Lysosome membrane</location>
        <topology evidence="4">Peripheral membrane protein</topology>
        <orientation evidence="4">Cytoplasmic side</orientation>
    </subcellularLocation>
    <subcellularLocation>
        <location evidence="11">Cytoplasmic vesicle</location>
        <location evidence="11">Autophagosome</location>
    </subcellularLocation>
    <text evidence="11">Recruitment to autophagosomes enchanced by Rab2.</text>
</comment>
<comment type="developmental stage">
    <text evidence="4 10 13">Expressed both maternally and zygotically in all stages of development (PubMed:9065698). Highest expression is in third larval instar (PubMed:10549280, PubMed:9065698). Expressed in the larval Garland nephrocytes and in the adult (at protein level) (PubMed:10549280, PubMed:27253064).</text>
</comment>
<comment type="disruption phenotype">
    <text evidence="4 8 10 11 13">Flies display impaired deposition of pigment granules (PubMed:10549280, PubMed:9065698). Member of the 'granule group' of eye color genes as mutants affect deposition in pigment granules of two types of pigments, the ommochromes and drosopterins (PubMed:10549280, PubMed:9065698). RNAi-mediated knockdown results in late endosome fragmentation and mislocalization of Vps8 (PubMed:27253064). RNAi-mediated knockdown causes impaired autophagosome clearance in fat body cells of starved or wandering 3rd instar (L3) larvae (PubMed:24554766). Conditional RNAi-mediated knock-down in muscle cells disrupts transverse-tubule (T-tubule) and myofibril remodeling in internal oblique muscles during metamorphosis (PubMed:28063257).</text>
</comment>
<comment type="miscellaneous">
    <text evidence="16">The name 'deep orange' was given due to the eye color phenotype cuased by hypomorphic mutations in the dor gene.</text>
</comment>
<comment type="similarity">
    <text evidence="15">Belongs to the VPS18 family.</text>
</comment>
<organism evidence="19">
    <name type="scientific">Drosophila melanogaster</name>
    <name type="common">Fruit fly</name>
    <dbReference type="NCBI Taxonomy" id="7227"/>
    <lineage>
        <taxon>Eukaryota</taxon>
        <taxon>Metazoa</taxon>
        <taxon>Ecdysozoa</taxon>
        <taxon>Arthropoda</taxon>
        <taxon>Hexapoda</taxon>
        <taxon>Insecta</taxon>
        <taxon>Pterygota</taxon>
        <taxon>Neoptera</taxon>
        <taxon>Endopterygota</taxon>
        <taxon>Diptera</taxon>
        <taxon>Brachycera</taxon>
        <taxon>Muscomorpha</taxon>
        <taxon>Ephydroidea</taxon>
        <taxon>Drosophilidae</taxon>
        <taxon>Drosophila</taxon>
        <taxon>Sophophora</taxon>
    </lineage>
</organism>
<gene>
    <name evidence="18" type="primary">dor</name>
    <name evidence="18" type="synonym">Vps18</name>
    <name evidence="18" type="ORF">CG3093</name>
</gene>
<name>VPS18_DROME</name>
<evidence type="ECO:0000255" key="1"/>
<evidence type="ECO:0000255" key="2">
    <source>
        <dbReference type="PROSITE-ProRule" id="PRU00175"/>
    </source>
</evidence>
<evidence type="ECO:0000255" key="3">
    <source>
        <dbReference type="PROSITE-ProRule" id="PRU01006"/>
    </source>
</evidence>
<evidence type="ECO:0000269" key="4">
    <source>
    </source>
</evidence>
<evidence type="ECO:0000269" key="5">
    <source>
    </source>
</evidence>
<evidence type="ECO:0000269" key="6">
    <source>
    </source>
</evidence>
<evidence type="ECO:0000269" key="7">
    <source>
    </source>
</evidence>
<evidence type="ECO:0000269" key="8">
    <source>
    </source>
</evidence>
<evidence type="ECO:0000269" key="9">
    <source>
    </source>
</evidence>
<evidence type="ECO:0000269" key="10">
    <source>
    </source>
</evidence>
<evidence type="ECO:0000269" key="11">
    <source>
    </source>
</evidence>
<evidence type="ECO:0000269" key="12">
    <source>
    </source>
</evidence>
<evidence type="ECO:0000269" key="13">
    <source>
    </source>
</evidence>
<evidence type="ECO:0000303" key="14">
    <source>
    </source>
</evidence>
<evidence type="ECO:0000305" key="15"/>
<evidence type="ECO:0000305" key="16">
    <source>
    </source>
</evidence>
<evidence type="ECO:0000305" key="17">
    <source>
    </source>
</evidence>
<evidence type="ECO:0000312" key="18">
    <source>
        <dbReference type="FlyBase" id="FBgn0000482"/>
    </source>
</evidence>
<evidence type="ECO:0000312" key="19">
    <source>
        <dbReference type="Proteomes" id="UP000000803"/>
    </source>
</evidence>
<reference key="1">
    <citation type="journal article" date="1997" name="Mol. Gen. Genet.">
        <title>Molecular characterization of the deep orange (dor) gene of Drosophila melanogaster.</title>
        <authorList>
            <person name="Shestopal S.A."/>
            <person name="Makumin I.V."/>
            <person name="Belyaeva E.S."/>
            <person name="Ashburner M."/>
        </authorList>
    </citation>
    <scope>NUCLEOTIDE SEQUENCE [MRNA]</scope>
    <scope>FUNCTION</scope>
    <scope>DEVELOPMENTAL STAGE</scope>
    <scope>DISRUPTION PHENOTYPE</scope>
    <source>
        <tissue>Embryo</tissue>
    </source>
</reference>
<reference key="2">
    <citation type="journal article" date="2000" name="Science">
        <title>The genome sequence of Drosophila melanogaster.</title>
        <authorList>
            <person name="Adams M.D."/>
            <person name="Celniker S.E."/>
            <person name="Holt R.A."/>
            <person name="Evans C.A."/>
            <person name="Gocayne J.D."/>
            <person name="Amanatides P.G."/>
            <person name="Scherer S.E."/>
            <person name="Li P.W."/>
            <person name="Hoskins R.A."/>
            <person name="Galle R.F."/>
            <person name="George R.A."/>
            <person name="Lewis S.E."/>
            <person name="Richards S."/>
            <person name="Ashburner M."/>
            <person name="Henderson S.N."/>
            <person name="Sutton G.G."/>
            <person name="Wortman J.R."/>
            <person name="Yandell M.D."/>
            <person name="Zhang Q."/>
            <person name="Chen L.X."/>
            <person name="Brandon R.C."/>
            <person name="Rogers Y.-H.C."/>
            <person name="Blazej R.G."/>
            <person name="Champe M."/>
            <person name="Pfeiffer B.D."/>
            <person name="Wan K.H."/>
            <person name="Doyle C."/>
            <person name="Baxter E.G."/>
            <person name="Helt G."/>
            <person name="Nelson C.R."/>
            <person name="Miklos G.L.G."/>
            <person name="Abril J.F."/>
            <person name="Agbayani A."/>
            <person name="An H.-J."/>
            <person name="Andrews-Pfannkoch C."/>
            <person name="Baldwin D."/>
            <person name="Ballew R.M."/>
            <person name="Basu A."/>
            <person name="Baxendale J."/>
            <person name="Bayraktaroglu L."/>
            <person name="Beasley E.M."/>
            <person name="Beeson K.Y."/>
            <person name="Benos P.V."/>
            <person name="Berman B.P."/>
            <person name="Bhandari D."/>
            <person name="Bolshakov S."/>
            <person name="Borkova D."/>
            <person name="Botchan M.R."/>
            <person name="Bouck J."/>
            <person name="Brokstein P."/>
            <person name="Brottier P."/>
            <person name="Burtis K.C."/>
            <person name="Busam D.A."/>
            <person name="Butler H."/>
            <person name="Cadieu E."/>
            <person name="Center A."/>
            <person name="Chandra I."/>
            <person name="Cherry J.M."/>
            <person name="Cawley S."/>
            <person name="Dahlke C."/>
            <person name="Davenport L.B."/>
            <person name="Davies P."/>
            <person name="de Pablos B."/>
            <person name="Delcher A."/>
            <person name="Deng Z."/>
            <person name="Mays A.D."/>
            <person name="Dew I."/>
            <person name="Dietz S.M."/>
            <person name="Dodson K."/>
            <person name="Doup L.E."/>
            <person name="Downes M."/>
            <person name="Dugan-Rocha S."/>
            <person name="Dunkov B.C."/>
            <person name="Dunn P."/>
            <person name="Durbin K.J."/>
            <person name="Evangelista C.C."/>
            <person name="Ferraz C."/>
            <person name="Ferriera S."/>
            <person name="Fleischmann W."/>
            <person name="Fosler C."/>
            <person name="Gabrielian A.E."/>
            <person name="Garg N.S."/>
            <person name="Gelbart W.M."/>
            <person name="Glasser K."/>
            <person name="Glodek A."/>
            <person name="Gong F."/>
            <person name="Gorrell J.H."/>
            <person name="Gu Z."/>
            <person name="Guan P."/>
            <person name="Harris M."/>
            <person name="Harris N.L."/>
            <person name="Harvey D.A."/>
            <person name="Heiman T.J."/>
            <person name="Hernandez J.R."/>
            <person name="Houck J."/>
            <person name="Hostin D."/>
            <person name="Houston K.A."/>
            <person name="Howland T.J."/>
            <person name="Wei M.-H."/>
            <person name="Ibegwam C."/>
            <person name="Jalali M."/>
            <person name="Kalush F."/>
            <person name="Karpen G.H."/>
            <person name="Ke Z."/>
            <person name="Kennison J.A."/>
            <person name="Ketchum K.A."/>
            <person name="Kimmel B.E."/>
            <person name="Kodira C.D."/>
            <person name="Kraft C.L."/>
            <person name="Kravitz S."/>
            <person name="Kulp D."/>
            <person name="Lai Z."/>
            <person name="Lasko P."/>
            <person name="Lei Y."/>
            <person name="Levitsky A.A."/>
            <person name="Li J.H."/>
            <person name="Li Z."/>
            <person name="Liang Y."/>
            <person name="Lin X."/>
            <person name="Liu X."/>
            <person name="Mattei B."/>
            <person name="McIntosh T.C."/>
            <person name="McLeod M.P."/>
            <person name="McPherson D."/>
            <person name="Merkulov G."/>
            <person name="Milshina N.V."/>
            <person name="Mobarry C."/>
            <person name="Morris J."/>
            <person name="Moshrefi A."/>
            <person name="Mount S.M."/>
            <person name="Moy M."/>
            <person name="Murphy B."/>
            <person name="Murphy L."/>
            <person name="Muzny D.M."/>
            <person name="Nelson D.L."/>
            <person name="Nelson D.R."/>
            <person name="Nelson K.A."/>
            <person name="Nixon K."/>
            <person name="Nusskern D.R."/>
            <person name="Pacleb J.M."/>
            <person name="Palazzolo M."/>
            <person name="Pittman G.S."/>
            <person name="Pan S."/>
            <person name="Pollard J."/>
            <person name="Puri V."/>
            <person name="Reese M.G."/>
            <person name="Reinert K."/>
            <person name="Remington K."/>
            <person name="Saunders R.D.C."/>
            <person name="Scheeler F."/>
            <person name="Shen H."/>
            <person name="Shue B.C."/>
            <person name="Siden-Kiamos I."/>
            <person name="Simpson M."/>
            <person name="Skupski M.P."/>
            <person name="Smith T.J."/>
            <person name="Spier E."/>
            <person name="Spradling A.C."/>
            <person name="Stapleton M."/>
            <person name="Strong R."/>
            <person name="Sun E."/>
            <person name="Svirskas R."/>
            <person name="Tector C."/>
            <person name="Turner R."/>
            <person name="Venter E."/>
            <person name="Wang A.H."/>
            <person name="Wang X."/>
            <person name="Wang Z.-Y."/>
            <person name="Wassarman D.A."/>
            <person name="Weinstock G.M."/>
            <person name="Weissenbach J."/>
            <person name="Williams S.M."/>
            <person name="Woodage T."/>
            <person name="Worley K.C."/>
            <person name="Wu D."/>
            <person name="Yang S."/>
            <person name="Yao Q.A."/>
            <person name="Ye J."/>
            <person name="Yeh R.-F."/>
            <person name="Zaveri J.S."/>
            <person name="Zhan M."/>
            <person name="Zhang G."/>
            <person name="Zhao Q."/>
            <person name="Zheng L."/>
            <person name="Zheng X.H."/>
            <person name="Zhong F.N."/>
            <person name="Zhong W."/>
            <person name="Zhou X."/>
            <person name="Zhu S.C."/>
            <person name="Zhu X."/>
            <person name="Smith H.O."/>
            <person name="Gibbs R.A."/>
            <person name="Myers E.W."/>
            <person name="Rubin G.M."/>
            <person name="Venter J.C."/>
        </authorList>
    </citation>
    <scope>NUCLEOTIDE SEQUENCE [LARGE SCALE GENOMIC DNA]</scope>
    <source>
        <strain>Berkeley</strain>
    </source>
</reference>
<reference key="3">
    <citation type="journal article" date="2002" name="Genome Biol.">
        <title>Annotation of the Drosophila melanogaster euchromatic genome: a systematic review.</title>
        <authorList>
            <person name="Misra S."/>
            <person name="Crosby M.A."/>
            <person name="Mungall C.J."/>
            <person name="Matthews B.B."/>
            <person name="Campbell K.S."/>
            <person name="Hradecky P."/>
            <person name="Huang Y."/>
            <person name="Kaminker J.S."/>
            <person name="Millburn G.H."/>
            <person name="Prochnik S.E."/>
            <person name="Smith C.D."/>
            <person name="Tupy J.L."/>
            <person name="Whitfield E.J."/>
            <person name="Bayraktaroglu L."/>
            <person name="Berman B.P."/>
            <person name="Bettencourt B.R."/>
            <person name="Celniker S.E."/>
            <person name="de Grey A.D.N.J."/>
            <person name="Drysdale R.A."/>
            <person name="Harris N.L."/>
            <person name="Richter J."/>
            <person name="Russo S."/>
            <person name="Schroeder A.J."/>
            <person name="Shu S.Q."/>
            <person name="Stapleton M."/>
            <person name="Yamada C."/>
            <person name="Ashburner M."/>
            <person name="Gelbart W.M."/>
            <person name="Rubin G.M."/>
            <person name="Lewis S.E."/>
        </authorList>
    </citation>
    <scope>GENOME REANNOTATION</scope>
    <source>
        <strain>Berkeley</strain>
    </source>
</reference>
<reference key="4">
    <citation type="journal article" date="2000" name="Science">
        <title>From sequence to chromosome: the tip of the X chromosome of D. melanogaster.</title>
        <authorList>
            <person name="Benos P.V."/>
            <person name="Gatt M.K."/>
            <person name="Ashburner M."/>
            <person name="Murphy L."/>
            <person name="Harris D."/>
            <person name="Barrell B.G."/>
            <person name="Ferraz C."/>
            <person name="Vidal S."/>
            <person name="Brun C."/>
            <person name="Demailles J."/>
            <person name="Cadieu E."/>
            <person name="Dreano S."/>
            <person name="Gloux S."/>
            <person name="Lelaure V."/>
            <person name="Mottier S."/>
            <person name="Galibert F."/>
            <person name="Borkova D."/>
            <person name="Minana B."/>
            <person name="Kafatos F.C."/>
            <person name="Louis C."/>
            <person name="Siden-Kiamos I."/>
            <person name="Bolshakov S."/>
            <person name="Papagiannakis G."/>
            <person name="Spanos L."/>
            <person name="Cox S."/>
            <person name="Madueno E."/>
            <person name="de Pablos B."/>
            <person name="Modolell J."/>
            <person name="Peter A."/>
            <person name="Schoettler P."/>
            <person name="Werner M."/>
            <person name="Mourkioti F."/>
            <person name="Beinert N."/>
            <person name="Dowe G."/>
            <person name="Schaefer U."/>
            <person name="Jaeckle H."/>
            <person name="Bucheton A."/>
            <person name="Callister D.M."/>
            <person name="Campbell L.A."/>
            <person name="Darlamitsou A."/>
            <person name="Henderson N.S."/>
            <person name="McMillan P.J."/>
            <person name="Salles C."/>
            <person name="Tait E.A."/>
            <person name="Valenti P."/>
            <person name="Saunders R.D.C."/>
            <person name="Glover D.M."/>
        </authorList>
    </citation>
    <scope>NUCLEOTIDE SEQUENCE [LARGE SCALE GENOMIC DNA]</scope>
    <source>
        <strain>Oregon-R</strain>
    </source>
</reference>
<reference key="5">
    <citation type="journal article" date="2002" name="Genome Biol.">
        <title>A Drosophila full-length cDNA resource.</title>
        <authorList>
            <person name="Stapleton M."/>
            <person name="Carlson J.W."/>
            <person name="Brokstein P."/>
            <person name="Yu C."/>
            <person name="Champe M."/>
            <person name="George R.A."/>
            <person name="Guarin H."/>
            <person name="Kronmiller B."/>
            <person name="Pacleb J.M."/>
            <person name="Park S."/>
            <person name="Wan K.H."/>
            <person name="Rubin G.M."/>
            <person name="Celniker S.E."/>
        </authorList>
    </citation>
    <scope>NUCLEOTIDE SEQUENCE [LARGE SCALE MRNA]</scope>
    <source>
        <strain>Berkeley</strain>
        <tissue>Embryo</tissue>
    </source>
</reference>
<reference key="6">
    <citation type="journal article" date="1999" name="Mol. Cell">
        <title>A role for the deep orange and carnation eye color genes in lysosomal delivery in Drosophila.</title>
        <authorList>
            <person name="Sevrioukov E.A."/>
            <person name="He J.-P."/>
            <person name="Moghrabi N."/>
            <person name="Sunio A."/>
            <person name="Kraemer H."/>
        </authorList>
    </citation>
    <scope>FUNCTION</scope>
    <scope>INTERACTION WITH CAR</scope>
    <scope>SUBCELLULAR LOCATION</scope>
    <scope>DEVELOPMENTAL STAGE</scope>
    <scope>MUTAGENESIS OF CYS-979</scope>
    <scope>DISRUPTION PHENOTYPE</scope>
</reference>
<reference key="7">
    <citation type="journal article" date="2008" name="J. Proteome Res.">
        <title>Phosphoproteome analysis of Drosophila melanogaster embryos.</title>
        <authorList>
            <person name="Zhai B."/>
            <person name="Villen J."/>
            <person name="Beausoleil S.A."/>
            <person name="Mintseris J."/>
            <person name="Gygi S.P."/>
        </authorList>
    </citation>
    <scope>PHOSPHORYLATION [LARGE SCALE ANALYSIS] AT SER-344</scope>
    <scope>IDENTIFICATION BY MASS SPECTROMETRY</scope>
    <source>
        <tissue>Embryo</tissue>
    </source>
</reference>
<reference key="8">
    <citation type="journal article" date="2010" name="J. Cell Biol.">
        <title>The novel endosomal membrane protein Ema interacts with the class C Vps-HOPS complex to promote endosomal maturation.</title>
        <authorList>
            <person name="Kim S."/>
            <person name="Wairkar Y.P."/>
            <person name="Daniels R.W."/>
            <person name="DiAntonio A."/>
        </authorList>
    </citation>
    <scope>INTERACTION WITH EMA</scope>
</reference>
<reference key="9">
    <citation type="journal article" date="2012" name="Mol. Biol. Cell">
        <title>The phosphoinositide-associated protein Rush hour regulates endosomal trafficking in Drosophila.</title>
        <authorList>
            <person name="Gailite I."/>
            <person name="Egger-Adam D."/>
            <person name="Wodarz A."/>
        </authorList>
    </citation>
    <scope>FUNCTION</scope>
</reference>
<reference key="10">
    <citation type="journal article" date="2014" name="J. Cell Biol.">
        <title>Reduced synaptic vesicle protein degradation at lysosomes curbs TBC1D24/sky-induced neurodegeneration.</title>
        <authorList>
            <person name="Fernandes A.C."/>
            <person name="Uytterhoeven V."/>
            <person name="Kuenen S."/>
            <person name="Wang Y.C."/>
            <person name="Slabbaert J.R."/>
            <person name="Swerts J."/>
            <person name="Kasprowicz J."/>
            <person name="Aerts S."/>
            <person name="Verstreken P."/>
        </authorList>
    </citation>
    <scope>FUNCTION</scope>
    <scope>MUTAGENESIS OF 508-ARG--GLU-1002 AND 551-TRP--GLU-1002</scope>
</reference>
<reference key="11">
    <citation type="journal article" date="2014" name="Mol. Biol. Cell">
        <title>Interaction of the HOPS complex with Syntaxin 17 mediates autophagosome clearance in Drosophila.</title>
        <authorList>
            <person name="Takats S."/>
            <person name="Pircs K."/>
            <person name="Nagy P."/>
            <person name="Varga A."/>
            <person name="Karpati M."/>
            <person name="Hegedus K."/>
            <person name="Kramer H."/>
            <person name="Kovacs A.L."/>
            <person name="Sass M."/>
            <person name="Juhasz G."/>
        </authorList>
    </citation>
    <scope>FUNCTION</scope>
    <scope>INTERACTION WITH SYX17</scope>
    <scope>DISRUPTION PHENOTYPE</scope>
</reference>
<reference key="12">
    <citation type="journal article" date="2016" name="Elife">
        <title>MiniCORVET is a Vps8-containing early endosomal tether in Drosophila.</title>
        <authorList>
            <person name="Lorincz P."/>
            <person name="Lakatos Z."/>
            <person name="Varga A."/>
            <person name="Maruzs T."/>
            <person name="Simon-Vecsei Z."/>
            <person name="Darula Z."/>
            <person name="Benko P."/>
            <person name="Csordas G."/>
            <person name="Lippai M."/>
            <person name="Ando I."/>
            <person name="Hegedus K."/>
            <person name="Medzihradszky K.F."/>
            <person name="Takats S."/>
            <person name="Juhasz G."/>
        </authorList>
    </citation>
    <scope>FUNCTION</scope>
    <scope>IDENTIFICATION IN THE CORVET COMPLEX</scope>
    <scope>SUBCELLULAR LOCATION</scope>
    <scope>DEVELOPMENTAL STAGE</scope>
    <scope>DISRUPTION PHENOTYPE</scope>
    <scope>IDENTIFICATION BY MASS SPECTROMETRY</scope>
</reference>
<reference key="13">
    <citation type="journal article" date="2017" name="Elife">
        <title>Genetic screen in Drosophila muscle identifies autophagy-mediated T-tubule remodeling and a Rab2 role in autophagy.</title>
        <authorList>
            <person name="Fujita N."/>
            <person name="Huang W."/>
            <person name="Lin T.H."/>
            <person name="Groulx J.F."/>
            <person name="Jean S."/>
            <person name="Nguyen J."/>
            <person name="Kuchitsu Y."/>
            <person name="Koyama-Honda I."/>
            <person name="Mizushima N."/>
            <person name="Fukuda M."/>
            <person name="Kiger A.A."/>
        </authorList>
    </citation>
    <scope>FUNCTION</scope>
    <scope>SUBCELLULAR LOCATION</scope>
    <scope>DISRUPTION PHENOTYPE</scope>
</reference>
<reference key="14">
    <citation type="journal article" date="2019" name="Elife">
        <title>Vps8 overexpression inhibits HOPS-dependent trafficking routes by outcompeting Vps41/Lt.</title>
        <authorList>
            <person name="Lorincz P."/>
            <person name="Kenez L.A."/>
            <person name="Toth S."/>
            <person name="Kiss V."/>
            <person name="Varga A."/>
            <person name="Csizmadia T."/>
            <person name="Simon-Vecsei Z."/>
            <person name="Juhasz G."/>
        </authorList>
    </citation>
    <scope>FUNCTION</scope>
    <scope>IDENTIFICATION IN THE HOPS COMPLEX</scope>
</reference>
<keyword id="KW-0072">Autophagy</keyword>
<keyword id="KW-0175">Coiled coil</keyword>
<keyword id="KW-0968">Cytoplasmic vesicle</keyword>
<keyword id="KW-0967">Endosome</keyword>
<keyword id="KW-0458">Lysosome</keyword>
<keyword id="KW-0472">Membrane</keyword>
<keyword id="KW-0479">Metal-binding</keyword>
<keyword id="KW-0597">Phosphoprotein</keyword>
<keyword id="KW-0653">Protein transport</keyword>
<keyword id="KW-1185">Reference proteome</keyword>
<keyword id="KW-0813">Transport</keyword>
<keyword id="KW-0862">Zinc</keyword>
<keyword id="KW-0863">Zinc-finger</keyword>